<comment type="function">
    <text evidence="1">Involved in iron-sulfur cluster biogenesis. Binds a 4Fe-4S cluster, can transfer this cluster to apoproteins, and thereby intervenes in the maturation of Fe/S proteins. Could also act as a scaffold/chaperone for damaged Fe/S proteins.</text>
</comment>
<comment type="cofactor">
    <cofactor evidence="1">
        <name>[4Fe-4S] cluster</name>
        <dbReference type="ChEBI" id="CHEBI:49883"/>
    </cofactor>
    <text evidence="1">Binds 1 [4Fe-4S] cluster per subunit. The cluster is presumably bound at the interface of two monomers.</text>
</comment>
<comment type="subunit">
    <text evidence="1">Homodimer.</text>
</comment>
<comment type="similarity">
    <text evidence="1">Belongs to the NfuA family.</text>
</comment>
<feature type="chain" id="PRO_1000069871" description="Fe/S biogenesis protein NfuA">
    <location>
        <begin position="1"/>
        <end position="198"/>
    </location>
</feature>
<feature type="binding site" evidence="1">
    <location>
        <position position="155"/>
    </location>
    <ligand>
        <name>[4Fe-4S] cluster</name>
        <dbReference type="ChEBI" id="CHEBI:49883"/>
    </ligand>
</feature>
<feature type="binding site" evidence="1">
    <location>
        <position position="158"/>
    </location>
    <ligand>
        <name>[4Fe-4S] cluster</name>
        <dbReference type="ChEBI" id="CHEBI:49883"/>
    </ligand>
</feature>
<sequence>MEQATQQIAISDAAQAHFRKLLDTQEEGTNIRIFVVNPGTPNAECGVSYCPPNAVEESDIEMKYNTFSAFIDEVSLPFLEEAEIDYVTEELGAQLTLKAPNAKMRKVADDAPLIERVEYVIQTQINPQLANHGGRITLIEITEDGYAVLQFGGGCNGCSMVDVTLKDGVEKQLVSLFPNELKGAKDITEHQRGEHSYY</sequence>
<accession>A5UA56</accession>
<name>NFUA_HAEIE</name>
<keyword id="KW-0004">4Fe-4S</keyword>
<keyword id="KW-0408">Iron</keyword>
<keyword id="KW-0411">Iron-sulfur</keyword>
<keyword id="KW-0479">Metal-binding</keyword>
<reference key="1">
    <citation type="journal article" date="2007" name="Genome Biol.">
        <title>Characterization and modeling of the Haemophilus influenzae core and supragenomes based on the complete genomic sequences of Rd and 12 clinical nontypeable strains.</title>
        <authorList>
            <person name="Hogg J.S."/>
            <person name="Hu F.Z."/>
            <person name="Janto B."/>
            <person name="Boissy R."/>
            <person name="Hayes J."/>
            <person name="Keefe R."/>
            <person name="Post J.C."/>
            <person name="Ehrlich G.D."/>
        </authorList>
    </citation>
    <scope>NUCLEOTIDE SEQUENCE [LARGE SCALE GENOMIC DNA]</scope>
    <source>
        <strain>PittEE</strain>
    </source>
</reference>
<dbReference type="EMBL" id="CP000671">
    <property type="protein sequence ID" value="ABQ97657.1"/>
    <property type="molecule type" value="Genomic_DNA"/>
</dbReference>
<dbReference type="SMR" id="A5UA56"/>
<dbReference type="KEGG" id="hip:CGSHiEE_00825"/>
<dbReference type="HOGENOM" id="CLU_094569_0_0_6"/>
<dbReference type="GO" id="GO:0051539">
    <property type="term" value="F:4 iron, 4 sulfur cluster binding"/>
    <property type="evidence" value="ECO:0007669"/>
    <property type="project" value="UniProtKB-UniRule"/>
</dbReference>
<dbReference type="GO" id="GO:0005506">
    <property type="term" value="F:iron ion binding"/>
    <property type="evidence" value="ECO:0007669"/>
    <property type="project" value="InterPro"/>
</dbReference>
<dbReference type="GO" id="GO:0016226">
    <property type="term" value="P:iron-sulfur cluster assembly"/>
    <property type="evidence" value="ECO:0007669"/>
    <property type="project" value="UniProtKB-UniRule"/>
</dbReference>
<dbReference type="GO" id="GO:0051604">
    <property type="term" value="P:protein maturation"/>
    <property type="evidence" value="ECO:0007669"/>
    <property type="project" value="UniProtKB-UniRule"/>
</dbReference>
<dbReference type="Gene3D" id="3.30.300.130">
    <property type="entry name" value="Fe-S cluster assembly (FSCA)"/>
    <property type="match status" value="1"/>
</dbReference>
<dbReference type="Gene3D" id="2.60.300.12">
    <property type="entry name" value="HesB-like domain"/>
    <property type="match status" value="1"/>
</dbReference>
<dbReference type="HAMAP" id="MF_01637">
    <property type="entry name" value="Fe_S_biogen_NfuA"/>
    <property type="match status" value="1"/>
</dbReference>
<dbReference type="InterPro" id="IPR017726">
    <property type="entry name" value="Fe/S_biogenesis_protein_NfuA"/>
</dbReference>
<dbReference type="InterPro" id="IPR000361">
    <property type="entry name" value="FeS_biogenesis"/>
</dbReference>
<dbReference type="InterPro" id="IPR034904">
    <property type="entry name" value="FSCA_dom_sf"/>
</dbReference>
<dbReference type="InterPro" id="IPR035903">
    <property type="entry name" value="HesB-like_dom_sf"/>
</dbReference>
<dbReference type="InterPro" id="IPR001075">
    <property type="entry name" value="NIF_FeS_clus_asmbl_NifU_C"/>
</dbReference>
<dbReference type="NCBIfam" id="NF008392">
    <property type="entry name" value="PRK11190.1"/>
    <property type="match status" value="1"/>
</dbReference>
<dbReference type="NCBIfam" id="TIGR03341">
    <property type="entry name" value="YhgI_GntY"/>
    <property type="match status" value="1"/>
</dbReference>
<dbReference type="PANTHER" id="PTHR11178:SF51">
    <property type="entry name" value="FE_S BIOGENESIS PROTEIN NFUA"/>
    <property type="match status" value="1"/>
</dbReference>
<dbReference type="PANTHER" id="PTHR11178">
    <property type="entry name" value="IRON-SULFUR CLUSTER SCAFFOLD PROTEIN NFU-RELATED"/>
    <property type="match status" value="1"/>
</dbReference>
<dbReference type="Pfam" id="PF01521">
    <property type="entry name" value="Fe-S_biosyn"/>
    <property type="match status" value="1"/>
</dbReference>
<dbReference type="Pfam" id="PF01106">
    <property type="entry name" value="NifU"/>
    <property type="match status" value="1"/>
</dbReference>
<dbReference type="SUPFAM" id="SSF117916">
    <property type="entry name" value="Fe-S cluster assembly (FSCA) domain-like"/>
    <property type="match status" value="1"/>
</dbReference>
<dbReference type="SUPFAM" id="SSF89360">
    <property type="entry name" value="HesB-like domain"/>
    <property type="match status" value="1"/>
</dbReference>
<evidence type="ECO:0000255" key="1">
    <source>
        <dbReference type="HAMAP-Rule" id="MF_01637"/>
    </source>
</evidence>
<organism>
    <name type="scientific">Haemophilus influenzae (strain PittEE)</name>
    <dbReference type="NCBI Taxonomy" id="374930"/>
    <lineage>
        <taxon>Bacteria</taxon>
        <taxon>Pseudomonadati</taxon>
        <taxon>Pseudomonadota</taxon>
        <taxon>Gammaproteobacteria</taxon>
        <taxon>Pasteurellales</taxon>
        <taxon>Pasteurellaceae</taxon>
        <taxon>Haemophilus</taxon>
    </lineage>
</organism>
<proteinExistence type="inferred from homology"/>
<gene>
    <name evidence="1" type="primary">nfuA</name>
    <name type="ordered locus">CGSHiEE_00825</name>
</gene>
<protein>
    <recommendedName>
        <fullName evidence="1">Fe/S biogenesis protein NfuA</fullName>
    </recommendedName>
</protein>